<proteinExistence type="inferred from homology"/>
<feature type="chain" id="PRO_0000408820" description="Restriction of telomere capping protein 5">
    <location>
        <begin position="1"/>
        <end position="625"/>
    </location>
</feature>
<feature type="domain" description="TLDc" evidence="2">
    <location>
        <begin position="335"/>
        <end position="571"/>
    </location>
</feature>
<feature type="region of interest" description="Disordered" evidence="3">
    <location>
        <begin position="305"/>
        <end position="327"/>
    </location>
</feature>
<organism>
    <name type="scientific">Candida tropicalis (strain ATCC MYA-3404 / T1)</name>
    <name type="common">Yeast</name>
    <dbReference type="NCBI Taxonomy" id="294747"/>
    <lineage>
        <taxon>Eukaryota</taxon>
        <taxon>Fungi</taxon>
        <taxon>Dikarya</taxon>
        <taxon>Ascomycota</taxon>
        <taxon>Saccharomycotina</taxon>
        <taxon>Pichiomycetes</taxon>
        <taxon>Debaryomycetaceae</taxon>
        <taxon>Candida/Lodderomyces clade</taxon>
        <taxon>Candida</taxon>
    </lineage>
</organism>
<comment type="function">
    <text evidence="1">May be involved in a process influencing telomere capping.</text>
</comment>
<comment type="subcellular location">
    <subcellularLocation>
        <location evidence="1">Cytoplasm</location>
    </subcellularLocation>
</comment>
<comment type="similarity">
    <text evidence="4">Belongs to the RTC5 family.</text>
</comment>
<gene>
    <name type="primary">RTC5</name>
    <name type="ORF">CTRG_04081</name>
</gene>
<keyword id="KW-0963">Cytoplasm</keyword>
<keyword id="KW-1185">Reference proteome</keyword>
<name>RTC5_CANTT</name>
<sequence>MGQATSNIDPQEKRDIVQEFTKEELQTLFYHRCLSLLKPIEVAFLKQDLNGKTSVTADDLGKLFKFPENTNSFSEGTLNILYHVMKLIGKFPFINNNNLAIEETLSFEELVVSLVFFSGRYKKIFNSDYDFLKLLFISLSDRPQTKDSKTIDEKNVDPGTEKFKTNLIVALEEEDKQELRARKINWSKLDVIKDFDHTEVQQLSVNAKRLQDMTTLCLILNAIVRHNHDAIQKQLVEYSDRWREFEVYSLYLLRYLDVYLELDKLENQKISYDSFSKGINGLLPYFFQINLNRMVCDSLLSSNSPMATKPTEEHNDSTESTPQKKHTFPKFQETKVVSIPFLSYVSSMLQGIGNPTILSPSNLVKLYAGSEAGFSIRSLETKIFKWQAPTLVVVSGKRLKSKTMQTNRRYQKFDEMYPRHFLASENHLRDWQHESDRITYAVLVNQPWKSSNKNNFGDEKSIILSISPRADYFKSVHSSILQGQSIYFNNLGMGLGFGNNQPLNKNDTKRFIPGDMSLTIEANLEFAVFRHLVNSSSSNDKFFHNSQQSHISHEDYEDRFTISTIEVWGLLVSGKELEEQKKQWEWEEKQAEARQNVNIRNLGEERAFLEMAGLVGNHGAAGGSM</sequence>
<evidence type="ECO:0000250" key="1"/>
<evidence type="ECO:0000255" key="2">
    <source>
        <dbReference type="PROSITE-ProRule" id="PRU01234"/>
    </source>
</evidence>
<evidence type="ECO:0000256" key="3">
    <source>
        <dbReference type="SAM" id="MobiDB-lite"/>
    </source>
</evidence>
<evidence type="ECO:0000305" key="4"/>
<protein>
    <recommendedName>
        <fullName>Restriction of telomere capping protein 5</fullName>
    </recommendedName>
</protein>
<accession>C5MCY0</accession>
<dbReference type="EMBL" id="GG692399">
    <property type="protein sequence ID" value="EER32410.1"/>
    <property type="molecule type" value="Genomic_DNA"/>
</dbReference>
<dbReference type="RefSeq" id="XP_002549784.1">
    <property type="nucleotide sequence ID" value="XM_002549738.1"/>
</dbReference>
<dbReference type="SMR" id="C5MCY0"/>
<dbReference type="STRING" id="294747.C5MCY0"/>
<dbReference type="EnsemblFungi" id="CTRG_04081-t43_1">
    <property type="protein sequence ID" value="CTRG_04081-t43_1-p1"/>
    <property type="gene ID" value="CTRG_04081"/>
</dbReference>
<dbReference type="GeneID" id="8297059"/>
<dbReference type="KEGG" id="ctp:CTRG_04081"/>
<dbReference type="VEuPathDB" id="FungiDB:CTRG_04081"/>
<dbReference type="eggNOG" id="ENOG502QV3R">
    <property type="taxonomic scope" value="Eukaryota"/>
</dbReference>
<dbReference type="HOGENOM" id="CLU_011918_1_0_1"/>
<dbReference type="OrthoDB" id="289228at2759"/>
<dbReference type="Proteomes" id="UP000002037">
    <property type="component" value="Unassembled WGS sequence"/>
</dbReference>
<dbReference type="GO" id="GO:0005737">
    <property type="term" value="C:cytoplasm"/>
    <property type="evidence" value="ECO:0007669"/>
    <property type="project" value="UniProtKB-SubCell"/>
</dbReference>
<dbReference type="InterPro" id="IPR006571">
    <property type="entry name" value="TLDc_dom"/>
</dbReference>
<dbReference type="Pfam" id="PF07534">
    <property type="entry name" value="TLD"/>
    <property type="match status" value="1"/>
</dbReference>
<dbReference type="SMART" id="SM00584">
    <property type="entry name" value="TLDc"/>
    <property type="match status" value="1"/>
</dbReference>
<dbReference type="PROSITE" id="PS51886">
    <property type="entry name" value="TLDC"/>
    <property type="match status" value="1"/>
</dbReference>
<reference key="1">
    <citation type="journal article" date="2009" name="Nature">
        <title>Evolution of pathogenicity and sexual reproduction in eight Candida genomes.</title>
        <authorList>
            <person name="Butler G."/>
            <person name="Rasmussen M.D."/>
            <person name="Lin M.F."/>
            <person name="Santos M.A.S."/>
            <person name="Sakthikumar S."/>
            <person name="Munro C.A."/>
            <person name="Rheinbay E."/>
            <person name="Grabherr M."/>
            <person name="Forche A."/>
            <person name="Reedy J.L."/>
            <person name="Agrafioti I."/>
            <person name="Arnaud M.B."/>
            <person name="Bates S."/>
            <person name="Brown A.J.P."/>
            <person name="Brunke S."/>
            <person name="Costanzo M.C."/>
            <person name="Fitzpatrick D.A."/>
            <person name="de Groot P.W.J."/>
            <person name="Harris D."/>
            <person name="Hoyer L.L."/>
            <person name="Hube B."/>
            <person name="Klis F.M."/>
            <person name="Kodira C."/>
            <person name="Lennard N."/>
            <person name="Logue M.E."/>
            <person name="Martin R."/>
            <person name="Neiman A.M."/>
            <person name="Nikolaou E."/>
            <person name="Quail M.A."/>
            <person name="Quinn J."/>
            <person name="Santos M.C."/>
            <person name="Schmitzberger F.F."/>
            <person name="Sherlock G."/>
            <person name="Shah P."/>
            <person name="Silverstein K.A.T."/>
            <person name="Skrzypek M.S."/>
            <person name="Soll D."/>
            <person name="Staggs R."/>
            <person name="Stansfield I."/>
            <person name="Stumpf M.P.H."/>
            <person name="Sudbery P.E."/>
            <person name="Srikantha T."/>
            <person name="Zeng Q."/>
            <person name="Berman J."/>
            <person name="Berriman M."/>
            <person name="Heitman J."/>
            <person name="Gow N.A.R."/>
            <person name="Lorenz M.C."/>
            <person name="Birren B.W."/>
            <person name="Kellis M."/>
            <person name="Cuomo C.A."/>
        </authorList>
    </citation>
    <scope>NUCLEOTIDE SEQUENCE [LARGE SCALE GENOMIC DNA]</scope>
    <source>
        <strain>ATCC MYA-3404 / T1</strain>
    </source>
</reference>